<accession>Q1GNP7</accession>
<organism>
    <name type="scientific">Sphingopyxis alaskensis (strain DSM 13593 / LMG 18877 / RB2256)</name>
    <name type="common">Sphingomonas alaskensis</name>
    <dbReference type="NCBI Taxonomy" id="317655"/>
    <lineage>
        <taxon>Bacteria</taxon>
        <taxon>Pseudomonadati</taxon>
        <taxon>Pseudomonadota</taxon>
        <taxon>Alphaproteobacteria</taxon>
        <taxon>Sphingomonadales</taxon>
        <taxon>Sphingomonadaceae</taxon>
        <taxon>Sphingopyxis</taxon>
    </lineage>
</organism>
<feature type="chain" id="PRO_0000334824" description="Leucine--tRNA ligase">
    <location>
        <begin position="1"/>
        <end position="849"/>
    </location>
</feature>
<feature type="short sequence motif" description="'HIGH' region">
    <location>
        <begin position="44"/>
        <end position="54"/>
    </location>
</feature>
<feature type="short sequence motif" description="'KMSKS' region">
    <location>
        <begin position="620"/>
        <end position="624"/>
    </location>
</feature>
<feature type="binding site" evidence="1">
    <location>
        <position position="623"/>
    </location>
    <ligand>
        <name>ATP</name>
        <dbReference type="ChEBI" id="CHEBI:30616"/>
    </ligand>
</feature>
<dbReference type="EC" id="6.1.1.4" evidence="1"/>
<dbReference type="EMBL" id="CP000356">
    <property type="protein sequence ID" value="ABF54725.1"/>
    <property type="molecule type" value="Genomic_DNA"/>
</dbReference>
<dbReference type="RefSeq" id="WP_011543288.1">
    <property type="nucleotide sequence ID" value="NC_008048.1"/>
</dbReference>
<dbReference type="SMR" id="Q1GNP7"/>
<dbReference type="STRING" id="317655.Sala_3020"/>
<dbReference type="KEGG" id="sal:Sala_3020"/>
<dbReference type="eggNOG" id="COG0495">
    <property type="taxonomic scope" value="Bacteria"/>
</dbReference>
<dbReference type="HOGENOM" id="CLU_004427_0_0_5"/>
<dbReference type="OrthoDB" id="9810365at2"/>
<dbReference type="Proteomes" id="UP000006578">
    <property type="component" value="Chromosome"/>
</dbReference>
<dbReference type="GO" id="GO:0005829">
    <property type="term" value="C:cytosol"/>
    <property type="evidence" value="ECO:0007669"/>
    <property type="project" value="TreeGrafter"/>
</dbReference>
<dbReference type="GO" id="GO:0002161">
    <property type="term" value="F:aminoacyl-tRNA deacylase activity"/>
    <property type="evidence" value="ECO:0007669"/>
    <property type="project" value="InterPro"/>
</dbReference>
<dbReference type="GO" id="GO:0005524">
    <property type="term" value="F:ATP binding"/>
    <property type="evidence" value="ECO:0007669"/>
    <property type="project" value="UniProtKB-UniRule"/>
</dbReference>
<dbReference type="GO" id="GO:0004823">
    <property type="term" value="F:leucine-tRNA ligase activity"/>
    <property type="evidence" value="ECO:0007669"/>
    <property type="project" value="UniProtKB-UniRule"/>
</dbReference>
<dbReference type="GO" id="GO:0006429">
    <property type="term" value="P:leucyl-tRNA aminoacylation"/>
    <property type="evidence" value="ECO:0007669"/>
    <property type="project" value="UniProtKB-UniRule"/>
</dbReference>
<dbReference type="CDD" id="cd07958">
    <property type="entry name" value="Anticodon_Ia_Leu_BEm"/>
    <property type="match status" value="1"/>
</dbReference>
<dbReference type="CDD" id="cd00812">
    <property type="entry name" value="LeuRS_core"/>
    <property type="match status" value="1"/>
</dbReference>
<dbReference type="FunFam" id="1.10.730.10:FF:000002">
    <property type="entry name" value="Leucine--tRNA ligase"/>
    <property type="match status" value="1"/>
</dbReference>
<dbReference type="Gene3D" id="2.20.28.290">
    <property type="match status" value="1"/>
</dbReference>
<dbReference type="Gene3D" id="3.10.20.590">
    <property type="match status" value="1"/>
</dbReference>
<dbReference type="Gene3D" id="3.40.50.620">
    <property type="entry name" value="HUPs"/>
    <property type="match status" value="2"/>
</dbReference>
<dbReference type="Gene3D" id="1.10.730.10">
    <property type="entry name" value="Isoleucyl-tRNA Synthetase, Domain 1"/>
    <property type="match status" value="1"/>
</dbReference>
<dbReference type="HAMAP" id="MF_00049_B">
    <property type="entry name" value="Leu_tRNA_synth_B"/>
    <property type="match status" value="1"/>
</dbReference>
<dbReference type="InterPro" id="IPR001412">
    <property type="entry name" value="aa-tRNA-synth_I_CS"/>
</dbReference>
<dbReference type="InterPro" id="IPR002300">
    <property type="entry name" value="aa-tRNA-synth_Ia"/>
</dbReference>
<dbReference type="InterPro" id="IPR002302">
    <property type="entry name" value="Leu-tRNA-ligase"/>
</dbReference>
<dbReference type="InterPro" id="IPR025709">
    <property type="entry name" value="Leu_tRNA-synth_edit"/>
</dbReference>
<dbReference type="InterPro" id="IPR013155">
    <property type="entry name" value="M/V/L/I-tRNA-synth_anticd-bd"/>
</dbReference>
<dbReference type="InterPro" id="IPR015413">
    <property type="entry name" value="Methionyl/Leucyl_tRNA_Synth"/>
</dbReference>
<dbReference type="InterPro" id="IPR014729">
    <property type="entry name" value="Rossmann-like_a/b/a_fold"/>
</dbReference>
<dbReference type="InterPro" id="IPR009080">
    <property type="entry name" value="tRNAsynth_Ia_anticodon-bd"/>
</dbReference>
<dbReference type="InterPro" id="IPR009008">
    <property type="entry name" value="Val/Leu/Ile-tRNA-synth_edit"/>
</dbReference>
<dbReference type="NCBIfam" id="TIGR00396">
    <property type="entry name" value="leuS_bact"/>
    <property type="match status" value="1"/>
</dbReference>
<dbReference type="PANTHER" id="PTHR43740:SF2">
    <property type="entry name" value="LEUCINE--TRNA LIGASE, MITOCHONDRIAL"/>
    <property type="match status" value="1"/>
</dbReference>
<dbReference type="PANTHER" id="PTHR43740">
    <property type="entry name" value="LEUCYL-TRNA SYNTHETASE"/>
    <property type="match status" value="1"/>
</dbReference>
<dbReference type="Pfam" id="PF08264">
    <property type="entry name" value="Anticodon_1"/>
    <property type="match status" value="1"/>
</dbReference>
<dbReference type="Pfam" id="PF00133">
    <property type="entry name" value="tRNA-synt_1"/>
    <property type="match status" value="2"/>
</dbReference>
<dbReference type="Pfam" id="PF13603">
    <property type="entry name" value="tRNA-synt_1_2"/>
    <property type="match status" value="1"/>
</dbReference>
<dbReference type="Pfam" id="PF09334">
    <property type="entry name" value="tRNA-synt_1g"/>
    <property type="match status" value="1"/>
</dbReference>
<dbReference type="PRINTS" id="PR00985">
    <property type="entry name" value="TRNASYNTHLEU"/>
</dbReference>
<dbReference type="SUPFAM" id="SSF47323">
    <property type="entry name" value="Anticodon-binding domain of a subclass of class I aminoacyl-tRNA synthetases"/>
    <property type="match status" value="1"/>
</dbReference>
<dbReference type="SUPFAM" id="SSF52374">
    <property type="entry name" value="Nucleotidylyl transferase"/>
    <property type="match status" value="1"/>
</dbReference>
<dbReference type="SUPFAM" id="SSF50677">
    <property type="entry name" value="ValRS/IleRS/LeuRS editing domain"/>
    <property type="match status" value="1"/>
</dbReference>
<dbReference type="PROSITE" id="PS00178">
    <property type="entry name" value="AA_TRNA_LIGASE_I"/>
    <property type="match status" value="1"/>
</dbReference>
<reference key="1">
    <citation type="journal article" date="2009" name="Proc. Natl. Acad. Sci. U.S.A.">
        <title>The genomic basis of trophic strategy in marine bacteria.</title>
        <authorList>
            <person name="Lauro F.M."/>
            <person name="McDougald D."/>
            <person name="Thomas T."/>
            <person name="Williams T.J."/>
            <person name="Egan S."/>
            <person name="Rice S."/>
            <person name="DeMaere M.Z."/>
            <person name="Ting L."/>
            <person name="Ertan H."/>
            <person name="Johnson J."/>
            <person name="Ferriera S."/>
            <person name="Lapidus A."/>
            <person name="Anderson I."/>
            <person name="Kyrpides N."/>
            <person name="Munk A.C."/>
            <person name="Detter C."/>
            <person name="Han C.S."/>
            <person name="Brown M.V."/>
            <person name="Robb F.T."/>
            <person name="Kjelleberg S."/>
            <person name="Cavicchioli R."/>
        </authorList>
    </citation>
    <scope>NUCLEOTIDE SEQUENCE [LARGE SCALE GENOMIC DNA]</scope>
    <source>
        <strain>DSM 13593 / LMG 18877 / RB2256</strain>
    </source>
</reference>
<gene>
    <name evidence="1" type="primary">leuS</name>
    <name type="ordered locus">Sala_3020</name>
</gene>
<proteinExistence type="inferred from homology"/>
<sequence>MTRETRFGALAADARWQKAWEAANSFATTDSGQKPKAYILEMFPYPSGRIHMGHVRNYAMGDVLARFKRMTGHDVLHPMGWDAFGMPAENAAMEKGVHPGGWTRANIDAMRAQLKRLGLAIDWSRELATCEPDYYGQEQALFLDLHAAGLVYRKESYVNWDPVDMTVLANEQVIDGRGWRSGALVEKKKLSQWFLKITDFADELLEGLGSLDKWPDKVRLMQENWIGKSQGLEFSFKFAGGAPAFAVFTTRPDTLYGASFAAISPDHPLAEKLAKDSPELAAFIAECRRQGTSAEQLETAEKLGFDTGLAVEHPLDPDWHLPVWVVNYVLMDYGTGAIFGCPAHDQRDLDFAHKYELPVHRVIADGDETAQHFTGSEAYTGPGKLVNSHFLDGMSIDEAKAAVITRAEHEGWGKGTTVWRLRDWGVSRQRYWGTPIPFIHCAACGTVPVPKSQLPVTLPDDVDFSVPGNPLDRHPTWKHVACPICEGAALRETDTLDTFVDSSWYFLRFASAPTDKPFDPEVIRRWLPVDQYIGGIEHAILHLLYARFWTRALNKLGMIDIEEPFASLFTQGMVTHETYSRPQGEGLPPLYFTPDEVERGADGATLIADGAPVEVGRVIKMSKSKKNVVDPDAILDQYGADAVRWFMLSDSPPERDLPWSEAGIEGAWRFVQRLWRLFGETENVGDGGEDKGLARKLHQTIAGVAADIEALGFNKAVAKIHALANEIEKAKPSATRAEACAKLILLVAPMMPHLAEEAWTALPASQRTTPMVADAAWPAADPALLIDDEVTIAIQMAGKLRDTMTVAKGADKAALEAAALARPRIVELLGGAAPKKVIVVPDRLVNILP</sequence>
<evidence type="ECO:0000255" key="1">
    <source>
        <dbReference type="HAMAP-Rule" id="MF_00049"/>
    </source>
</evidence>
<comment type="catalytic activity">
    <reaction evidence="1">
        <text>tRNA(Leu) + L-leucine + ATP = L-leucyl-tRNA(Leu) + AMP + diphosphate</text>
        <dbReference type="Rhea" id="RHEA:11688"/>
        <dbReference type="Rhea" id="RHEA-COMP:9613"/>
        <dbReference type="Rhea" id="RHEA-COMP:9622"/>
        <dbReference type="ChEBI" id="CHEBI:30616"/>
        <dbReference type="ChEBI" id="CHEBI:33019"/>
        <dbReference type="ChEBI" id="CHEBI:57427"/>
        <dbReference type="ChEBI" id="CHEBI:78442"/>
        <dbReference type="ChEBI" id="CHEBI:78494"/>
        <dbReference type="ChEBI" id="CHEBI:456215"/>
        <dbReference type="EC" id="6.1.1.4"/>
    </reaction>
</comment>
<comment type="subcellular location">
    <subcellularLocation>
        <location evidence="1">Cytoplasm</location>
    </subcellularLocation>
</comment>
<comment type="similarity">
    <text evidence="1">Belongs to the class-I aminoacyl-tRNA synthetase family.</text>
</comment>
<keyword id="KW-0030">Aminoacyl-tRNA synthetase</keyword>
<keyword id="KW-0067">ATP-binding</keyword>
<keyword id="KW-0963">Cytoplasm</keyword>
<keyword id="KW-0436">Ligase</keyword>
<keyword id="KW-0547">Nucleotide-binding</keyword>
<keyword id="KW-0648">Protein biosynthesis</keyword>
<keyword id="KW-1185">Reference proteome</keyword>
<name>SYL_SPHAL</name>
<protein>
    <recommendedName>
        <fullName evidence="1">Leucine--tRNA ligase</fullName>
        <ecNumber evidence="1">6.1.1.4</ecNumber>
    </recommendedName>
    <alternativeName>
        <fullName evidence="1">Leucyl-tRNA synthetase</fullName>
        <shortName evidence="1">LeuRS</shortName>
    </alternativeName>
</protein>